<feature type="chain" id="PRO_0000000837" description="Actin, cytoplasmic 2">
    <location>
        <begin position="1"/>
        <end position="375"/>
    </location>
</feature>
<feature type="initiator methionine" description="Removed; alternate" evidence="3">
    <location>
        <position position="1"/>
    </location>
</feature>
<feature type="chain" id="PRO_0000367103" description="Actin, cytoplasmic 2, N-terminally processed">
    <location>
        <begin position="2"/>
        <end position="375"/>
    </location>
</feature>
<feature type="modified residue" description="N-acetylmethionine" evidence="3">
    <location>
        <position position="1"/>
    </location>
</feature>
<feature type="modified residue" description="N-acetylglutamate; in Actin, cytoplasmic 2, N-terminally processed" evidence="3">
    <location>
        <position position="2"/>
    </location>
</feature>
<feature type="modified residue" description="Methionine (R)-sulfoxide" evidence="2">
    <location>
        <position position="44"/>
    </location>
</feature>
<feature type="modified residue" description="Methionine (R)-sulfoxide" evidence="2">
    <location>
        <position position="47"/>
    </location>
</feature>
<feature type="modified residue" description="Tele-methylhistidine" evidence="1">
    <location>
        <position position="73"/>
    </location>
</feature>
<feature type="modified residue" description="N6-methyllysine" evidence="3">
    <location>
        <position position="84"/>
    </location>
</feature>
<sequence>MEEEIAALVIDNGSGMCKAGFAGDDAPRAVFPSIVGRPRHQGVMVGMGQKDSYVGDEAQSKRGILTLKYPIEHGIVTNWDDMEKIWHHTFYNELRVAPEEHPVLLTEAPLNPKANREKMTQIMFETFNTPAMYVAIQAVLSLYASGRTTGIVMDSGDGVTHTVPIYEGYALPHAILRLDLAGRDLTDYLMKILTERGYSFTTTAEREIVRDIKEKLCYVALDFEQEMATAASSSSLEKSYELPDGQVITIGNERFRCPEALFQPSFLGMESCGIHETTFNSIMKCDVDIRKDLYANTVLSGGTTMYPGIADRMQKEITALAPSTMKIKIIAPPERKYSVWIGGSILASLSTFQQMWISKQEYDESGPSIVHRKCF</sequence>
<reference key="1">
    <citation type="submission" date="1998-07" db="EMBL/GenBank/DDBJ databases">
        <title>Isolation of the complete gamma-actin cDNA from the common brushtail possum.</title>
        <authorList>
            <person name="Wedlock D.N."/>
            <person name="Hickson R."/>
            <person name="Buddle B.M."/>
        </authorList>
    </citation>
    <scope>NUCLEOTIDE SEQUENCE [MRNA]</scope>
</reference>
<organism>
    <name type="scientific">Trichosurus vulpecula</name>
    <name type="common">Brush-tailed possum</name>
    <dbReference type="NCBI Taxonomy" id="9337"/>
    <lineage>
        <taxon>Eukaryota</taxon>
        <taxon>Metazoa</taxon>
        <taxon>Chordata</taxon>
        <taxon>Craniata</taxon>
        <taxon>Vertebrata</taxon>
        <taxon>Euteleostomi</taxon>
        <taxon>Mammalia</taxon>
        <taxon>Metatheria</taxon>
        <taxon>Diprotodontia</taxon>
        <taxon>Phalangeridae</taxon>
        <taxon>Trichosurus</taxon>
    </lineage>
</organism>
<gene>
    <name type="primary">ACTG1</name>
    <name type="synonym">ACTG</name>
</gene>
<keyword id="KW-0007">Acetylation</keyword>
<keyword id="KW-0067">ATP-binding</keyword>
<keyword id="KW-0963">Cytoplasm</keyword>
<keyword id="KW-0206">Cytoskeleton</keyword>
<keyword id="KW-0378">Hydrolase</keyword>
<keyword id="KW-0488">Methylation</keyword>
<keyword id="KW-0547">Nucleotide-binding</keyword>
<keyword id="KW-0558">Oxidation</keyword>
<evidence type="ECO:0000250" key="1">
    <source>
        <dbReference type="UniProtKB" id="P63258"/>
    </source>
</evidence>
<evidence type="ECO:0000250" key="2">
    <source>
        <dbReference type="UniProtKB" id="P63260"/>
    </source>
</evidence>
<evidence type="ECO:0000250" key="3">
    <source>
        <dbReference type="UniProtKB" id="P63261"/>
    </source>
</evidence>
<evidence type="ECO:0000250" key="4">
    <source>
        <dbReference type="UniProtKB" id="P68137"/>
    </source>
</evidence>
<evidence type="ECO:0000305" key="5"/>
<name>ACTG_TRIVU</name>
<dbReference type="EC" id="3.6.4.-" evidence="4"/>
<dbReference type="EMBL" id="AF076191">
    <property type="protein sequence ID" value="AAC26520.1"/>
    <property type="molecule type" value="mRNA"/>
</dbReference>
<dbReference type="RefSeq" id="XP_036612181.1">
    <property type="nucleotide sequence ID" value="XM_036756286.1"/>
</dbReference>
<dbReference type="SMR" id="P63257"/>
<dbReference type="GeneID" id="118847696"/>
<dbReference type="OrthoDB" id="9434244at2759"/>
<dbReference type="GO" id="GO:0005856">
    <property type="term" value="C:cytoskeleton"/>
    <property type="evidence" value="ECO:0000250"/>
    <property type="project" value="AgBase"/>
</dbReference>
<dbReference type="GO" id="GO:0097433">
    <property type="term" value="C:dense body"/>
    <property type="evidence" value="ECO:0000250"/>
    <property type="project" value="AgBase"/>
</dbReference>
<dbReference type="GO" id="GO:0005925">
    <property type="term" value="C:focal adhesion"/>
    <property type="evidence" value="ECO:0000250"/>
    <property type="project" value="AgBase"/>
</dbReference>
<dbReference type="GO" id="GO:0005886">
    <property type="term" value="C:plasma membrane"/>
    <property type="evidence" value="ECO:0000250"/>
    <property type="project" value="AgBase"/>
</dbReference>
<dbReference type="GO" id="GO:0005524">
    <property type="term" value="F:ATP binding"/>
    <property type="evidence" value="ECO:0007669"/>
    <property type="project" value="UniProtKB-KW"/>
</dbReference>
<dbReference type="GO" id="GO:0016787">
    <property type="term" value="F:hydrolase activity"/>
    <property type="evidence" value="ECO:0007669"/>
    <property type="project" value="UniProtKB-KW"/>
</dbReference>
<dbReference type="CDD" id="cd10224">
    <property type="entry name" value="ASKHA_NBD_actin"/>
    <property type="match status" value="1"/>
</dbReference>
<dbReference type="FunFam" id="3.30.420.40:FF:000131">
    <property type="entry name" value="Actin, alpha skeletal muscle"/>
    <property type="match status" value="1"/>
</dbReference>
<dbReference type="FunFam" id="3.30.420.40:FF:000291">
    <property type="entry name" value="Actin, alpha skeletal muscle"/>
    <property type="match status" value="1"/>
</dbReference>
<dbReference type="FunFam" id="3.90.640.10:FF:000047">
    <property type="entry name" value="Actin, alpha skeletal muscle"/>
    <property type="match status" value="1"/>
</dbReference>
<dbReference type="FunFam" id="3.30.420.40:FF:000058">
    <property type="entry name" value="Putative actin-related protein 5"/>
    <property type="match status" value="1"/>
</dbReference>
<dbReference type="Gene3D" id="3.30.420.40">
    <property type="match status" value="2"/>
</dbReference>
<dbReference type="Gene3D" id="3.90.640.10">
    <property type="entry name" value="Actin, Chain A, domain 4"/>
    <property type="match status" value="1"/>
</dbReference>
<dbReference type="InterPro" id="IPR004000">
    <property type="entry name" value="Actin"/>
</dbReference>
<dbReference type="InterPro" id="IPR020902">
    <property type="entry name" value="Actin/actin-like_CS"/>
</dbReference>
<dbReference type="InterPro" id="IPR004001">
    <property type="entry name" value="Actin_CS"/>
</dbReference>
<dbReference type="InterPro" id="IPR043129">
    <property type="entry name" value="ATPase_NBD"/>
</dbReference>
<dbReference type="PANTHER" id="PTHR11937">
    <property type="entry name" value="ACTIN"/>
    <property type="match status" value="1"/>
</dbReference>
<dbReference type="Pfam" id="PF00022">
    <property type="entry name" value="Actin"/>
    <property type="match status" value="1"/>
</dbReference>
<dbReference type="PRINTS" id="PR00190">
    <property type="entry name" value="ACTIN"/>
</dbReference>
<dbReference type="SMART" id="SM00268">
    <property type="entry name" value="ACTIN"/>
    <property type="match status" value="1"/>
</dbReference>
<dbReference type="SUPFAM" id="SSF53067">
    <property type="entry name" value="Actin-like ATPase domain"/>
    <property type="match status" value="2"/>
</dbReference>
<dbReference type="PROSITE" id="PS00406">
    <property type="entry name" value="ACTINS_1"/>
    <property type="match status" value="1"/>
</dbReference>
<dbReference type="PROSITE" id="PS00432">
    <property type="entry name" value="ACTINS_2"/>
    <property type="match status" value="1"/>
</dbReference>
<dbReference type="PROSITE" id="PS01132">
    <property type="entry name" value="ACTINS_ACT_LIKE"/>
    <property type="match status" value="1"/>
</dbReference>
<comment type="function">
    <text evidence="2 3">Actins are highly conserved proteins that are involved in various types of cell motility and are ubiquitously expressed in all eukaryotic cells. May play a role in the repair of noise-induced stereocilia gaps thereby maintains hearing sensitivity following loud noise damage (By similarity).</text>
</comment>
<comment type="catalytic activity">
    <reaction evidence="4">
        <text>ATP + H2O = ADP + phosphate + H(+)</text>
        <dbReference type="Rhea" id="RHEA:13065"/>
        <dbReference type="ChEBI" id="CHEBI:15377"/>
        <dbReference type="ChEBI" id="CHEBI:15378"/>
        <dbReference type="ChEBI" id="CHEBI:30616"/>
        <dbReference type="ChEBI" id="CHEBI:43474"/>
        <dbReference type="ChEBI" id="CHEBI:456216"/>
    </reaction>
</comment>
<comment type="subunit">
    <text evidence="3">Polymerization of globular actin (G-actin) leads to a structural filament (F-actin) in the form of a two-stranded helix. Each actin can bind to 4 others. Interacts with TWF1, CAPZB, cofilin and profilin.</text>
</comment>
<comment type="subcellular location">
    <subcellularLocation>
        <location evidence="3">Cytoplasm</location>
        <location evidence="3">Cytoskeleton</location>
    </subcellularLocation>
</comment>
<comment type="PTM">
    <molecule>Actin, cytoplasmic 2</molecule>
    <text evidence="3">N-terminal cleavage of acetylated methionine of immature cytoplasmic actin by ACTMAP.</text>
</comment>
<comment type="PTM">
    <text evidence="2">Oxidation of Met-44 and Met-47 by MICALs (MICAL1, MICAL2 or MICAL3) to form methionine sulfoxide promotes actin filament depolymerization. MICAL1 and MICAL2 produce the (R)-S-oxide form. The (R)-S-oxide form is reverted by MSRB1 and MSRB2, which promote actin repolymerization.</text>
</comment>
<comment type="PTM">
    <text evidence="3">Monomethylation at Lys-84 (K84me1) regulates actin-myosin interaction and actomyosin-dependent processes. Demethylation by ALKBH4 is required for maintaining actomyosin dynamics supporting normal cleavage furrow ingression during cytokinesis and cell migration.</text>
</comment>
<comment type="PTM">
    <molecule>Actin, cytoplasmic 2, N-terminally processed</molecule>
    <text evidence="3">N-terminal acetylation by NAA80 affects actin filament depolymerization and elongation, including elongation driven by formins. In contrast, filament nucleation by the Arp2/3 complex is not affected.</text>
</comment>
<comment type="PTM">
    <text evidence="3">Methylated at His-73 by SETD3.</text>
</comment>
<comment type="miscellaneous">
    <text>In vertebrates 3 main groups of actin isoforms, alpha, beta and gamma have been identified. The alpha actins are found in muscle tissues and are a major constituent of the contractile apparatus. The beta and gamma actins coexist in most cell types as components of the cytoskeleton and as mediators of internal cell motility.</text>
</comment>
<comment type="similarity">
    <text evidence="5">Belongs to the actin family.</text>
</comment>
<protein>
    <recommendedName>
        <fullName>Actin, cytoplasmic 2</fullName>
        <ecNumber evidence="4">3.6.4.-</ecNumber>
    </recommendedName>
    <alternativeName>
        <fullName>Gamma-actin</fullName>
    </alternativeName>
    <component>
        <recommendedName>
            <fullName>Actin, cytoplasmic 2, N-terminally processed</fullName>
        </recommendedName>
    </component>
</protein>
<proteinExistence type="evidence at transcript level"/>
<accession>P63257</accession>
<accession>P02571</accession>
<accession>P14104</accession>
<accession>P99022</accession>